<sequence>MKIAIDAMGGDYAPMEIVKGVEIARDRYPDIEFLLFGTSEQVKPLVKDWSHITLIPTTEVIEMGDEPVKAMRRKKDSSMVRAANAVKAGEADALFSAGNTGALLSSAIFLIGRIKGVDRPALATALPSFAGENDQFVFMDLGANAESKASHLYQYGILGSFYASHVLGINDARVRLLNNGAEEDKGDEVHKIAHQLMKNSQSFNFLGNVEARELLEGTADVVVADGFSGNAALKATEGTALMMLKQIKQAIMQTGLRGKMGGLLLKPAFKDIQKKLDYNEAGGAVILGVNAPVVKTHGSAKANAVANTMGQIKKMIEKNLVPDIRTYIADHKDELQAAKNEL</sequence>
<keyword id="KW-0963">Cytoplasm</keyword>
<keyword id="KW-0444">Lipid biosynthesis</keyword>
<keyword id="KW-0443">Lipid metabolism</keyword>
<keyword id="KW-0594">Phospholipid biosynthesis</keyword>
<keyword id="KW-1208">Phospholipid metabolism</keyword>
<keyword id="KW-1185">Reference proteome</keyword>
<keyword id="KW-0808">Transferase</keyword>
<name>PLSX_LEUMM</name>
<comment type="function">
    <text evidence="1">Catalyzes the reversible formation of acyl-phosphate (acyl-PO(4)) from acyl-[acyl-carrier-protein] (acyl-ACP). This enzyme utilizes acyl-ACP as fatty acyl donor, but not acyl-CoA.</text>
</comment>
<comment type="catalytic activity">
    <reaction evidence="1">
        <text>a fatty acyl-[ACP] + phosphate = an acyl phosphate + holo-[ACP]</text>
        <dbReference type="Rhea" id="RHEA:42292"/>
        <dbReference type="Rhea" id="RHEA-COMP:9685"/>
        <dbReference type="Rhea" id="RHEA-COMP:14125"/>
        <dbReference type="ChEBI" id="CHEBI:43474"/>
        <dbReference type="ChEBI" id="CHEBI:59918"/>
        <dbReference type="ChEBI" id="CHEBI:64479"/>
        <dbReference type="ChEBI" id="CHEBI:138651"/>
        <dbReference type="EC" id="2.3.1.274"/>
    </reaction>
</comment>
<comment type="pathway">
    <text evidence="1">Lipid metabolism; phospholipid metabolism.</text>
</comment>
<comment type="subunit">
    <text evidence="1">Homodimer. Probably interacts with PlsY.</text>
</comment>
<comment type="subcellular location">
    <subcellularLocation>
        <location evidence="1">Cytoplasm</location>
    </subcellularLocation>
    <text evidence="1">Associated with the membrane possibly through PlsY.</text>
</comment>
<comment type="similarity">
    <text evidence="1">Belongs to the PlsX family.</text>
</comment>
<organism>
    <name type="scientific">Leuconostoc mesenteroides subsp. mesenteroides (strain ATCC 8293 / DSM 20343 / BCRC 11652 / CCM 1803 / JCM 6124 / NCDO 523 / NBRC 100496 / NCIMB 8023 / NCTC 12954 / NRRL B-1118 / 37Y)</name>
    <dbReference type="NCBI Taxonomy" id="203120"/>
    <lineage>
        <taxon>Bacteria</taxon>
        <taxon>Bacillati</taxon>
        <taxon>Bacillota</taxon>
        <taxon>Bacilli</taxon>
        <taxon>Lactobacillales</taxon>
        <taxon>Lactobacillaceae</taxon>
        <taxon>Leuconostoc</taxon>
    </lineage>
</organism>
<gene>
    <name evidence="1" type="primary">plsX</name>
    <name type="ordered locus">LEUM_0537</name>
</gene>
<protein>
    <recommendedName>
        <fullName evidence="1">Phosphate acyltransferase</fullName>
        <ecNumber evidence="1">2.3.1.274</ecNumber>
    </recommendedName>
    <alternativeName>
        <fullName evidence="1">Acyl-ACP phosphotransacylase</fullName>
    </alternativeName>
    <alternativeName>
        <fullName evidence="1">Acyl-[acyl-carrier-protein]--phosphate acyltransferase</fullName>
    </alternativeName>
    <alternativeName>
        <fullName evidence="1">Phosphate-acyl-ACP acyltransferase</fullName>
    </alternativeName>
</protein>
<accession>Q03YS1</accession>
<proteinExistence type="inferred from homology"/>
<evidence type="ECO:0000255" key="1">
    <source>
        <dbReference type="HAMAP-Rule" id="MF_00019"/>
    </source>
</evidence>
<dbReference type="EC" id="2.3.1.274" evidence="1"/>
<dbReference type="EMBL" id="CP000414">
    <property type="protein sequence ID" value="ABJ61651.1"/>
    <property type="molecule type" value="Genomic_DNA"/>
</dbReference>
<dbReference type="RefSeq" id="WP_011679367.1">
    <property type="nucleotide sequence ID" value="NC_008531.1"/>
</dbReference>
<dbReference type="SMR" id="Q03YS1"/>
<dbReference type="EnsemblBacteria" id="ABJ61651">
    <property type="protein sequence ID" value="ABJ61651"/>
    <property type="gene ID" value="LEUM_0537"/>
</dbReference>
<dbReference type="GeneID" id="29577129"/>
<dbReference type="KEGG" id="lme:LEUM_0537"/>
<dbReference type="eggNOG" id="COG0416">
    <property type="taxonomic scope" value="Bacteria"/>
</dbReference>
<dbReference type="HOGENOM" id="CLU_039379_1_1_9"/>
<dbReference type="UniPathway" id="UPA00085"/>
<dbReference type="Proteomes" id="UP000000362">
    <property type="component" value="Chromosome"/>
</dbReference>
<dbReference type="GO" id="GO:0005737">
    <property type="term" value="C:cytoplasm"/>
    <property type="evidence" value="ECO:0007669"/>
    <property type="project" value="UniProtKB-SubCell"/>
</dbReference>
<dbReference type="GO" id="GO:0043811">
    <property type="term" value="F:phosphate:acyl-[acyl carrier protein] acyltransferase activity"/>
    <property type="evidence" value="ECO:0007669"/>
    <property type="project" value="UniProtKB-UniRule"/>
</dbReference>
<dbReference type="GO" id="GO:0006633">
    <property type="term" value="P:fatty acid biosynthetic process"/>
    <property type="evidence" value="ECO:0007669"/>
    <property type="project" value="UniProtKB-UniRule"/>
</dbReference>
<dbReference type="GO" id="GO:0008654">
    <property type="term" value="P:phospholipid biosynthetic process"/>
    <property type="evidence" value="ECO:0007669"/>
    <property type="project" value="UniProtKB-KW"/>
</dbReference>
<dbReference type="Gene3D" id="3.40.718.10">
    <property type="entry name" value="Isopropylmalate Dehydrogenase"/>
    <property type="match status" value="1"/>
</dbReference>
<dbReference type="HAMAP" id="MF_00019">
    <property type="entry name" value="PlsX"/>
    <property type="match status" value="1"/>
</dbReference>
<dbReference type="InterPro" id="IPR003664">
    <property type="entry name" value="FA_synthesis"/>
</dbReference>
<dbReference type="InterPro" id="IPR012281">
    <property type="entry name" value="Phospholipid_synth_PlsX-like"/>
</dbReference>
<dbReference type="NCBIfam" id="TIGR00182">
    <property type="entry name" value="plsX"/>
    <property type="match status" value="1"/>
</dbReference>
<dbReference type="PANTHER" id="PTHR30100">
    <property type="entry name" value="FATTY ACID/PHOSPHOLIPID SYNTHESIS PROTEIN PLSX"/>
    <property type="match status" value="1"/>
</dbReference>
<dbReference type="PANTHER" id="PTHR30100:SF1">
    <property type="entry name" value="PHOSPHATE ACYLTRANSFERASE"/>
    <property type="match status" value="1"/>
</dbReference>
<dbReference type="Pfam" id="PF02504">
    <property type="entry name" value="FA_synthesis"/>
    <property type="match status" value="1"/>
</dbReference>
<dbReference type="PIRSF" id="PIRSF002465">
    <property type="entry name" value="Phsphlp_syn_PlsX"/>
    <property type="match status" value="1"/>
</dbReference>
<dbReference type="SUPFAM" id="SSF53659">
    <property type="entry name" value="Isocitrate/Isopropylmalate dehydrogenase-like"/>
    <property type="match status" value="1"/>
</dbReference>
<reference key="1">
    <citation type="journal article" date="2006" name="Proc. Natl. Acad. Sci. U.S.A.">
        <title>Comparative genomics of the lactic acid bacteria.</title>
        <authorList>
            <person name="Makarova K.S."/>
            <person name="Slesarev A."/>
            <person name="Wolf Y.I."/>
            <person name="Sorokin A."/>
            <person name="Mirkin B."/>
            <person name="Koonin E.V."/>
            <person name="Pavlov A."/>
            <person name="Pavlova N."/>
            <person name="Karamychev V."/>
            <person name="Polouchine N."/>
            <person name="Shakhova V."/>
            <person name="Grigoriev I."/>
            <person name="Lou Y."/>
            <person name="Rohksar D."/>
            <person name="Lucas S."/>
            <person name="Huang K."/>
            <person name="Goodstein D.M."/>
            <person name="Hawkins T."/>
            <person name="Plengvidhya V."/>
            <person name="Welker D."/>
            <person name="Hughes J."/>
            <person name="Goh Y."/>
            <person name="Benson A."/>
            <person name="Baldwin K."/>
            <person name="Lee J.-H."/>
            <person name="Diaz-Muniz I."/>
            <person name="Dosti B."/>
            <person name="Smeianov V."/>
            <person name="Wechter W."/>
            <person name="Barabote R."/>
            <person name="Lorca G."/>
            <person name="Altermann E."/>
            <person name="Barrangou R."/>
            <person name="Ganesan B."/>
            <person name="Xie Y."/>
            <person name="Rawsthorne H."/>
            <person name="Tamir D."/>
            <person name="Parker C."/>
            <person name="Breidt F."/>
            <person name="Broadbent J.R."/>
            <person name="Hutkins R."/>
            <person name="O'Sullivan D."/>
            <person name="Steele J."/>
            <person name="Unlu G."/>
            <person name="Saier M.H. Jr."/>
            <person name="Klaenhammer T."/>
            <person name="Richardson P."/>
            <person name="Kozyavkin S."/>
            <person name="Weimer B.C."/>
            <person name="Mills D.A."/>
        </authorList>
    </citation>
    <scope>NUCLEOTIDE SEQUENCE [LARGE SCALE GENOMIC DNA]</scope>
    <source>
        <strain>ATCC 8293 / DSM 20343 / BCRC 11652 / CCM 1803 / JCM 6124 / NCDO 523 / NBRC 100496 / NCIMB 8023 / NCTC 12954 / NRRL B-1118 / 37Y</strain>
    </source>
</reference>
<feature type="chain" id="PRO_0000329238" description="Phosphate acyltransferase">
    <location>
        <begin position="1"/>
        <end position="342"/>
    </location>
</feature>